<keyword id="KW-1185">Reference proteome</keyword>
<keyword id="KW-0687">Ribonucleoprotein</keyword>
<keyword id="KW-0689">Ribosomal protein</keyword>
<keyword id="KW-0694">RNA-binding</keyword>
<keyword id="KW-0699">rRNA-binding</keyword>
<sequence>MSTRSRARKRSRVRSRTRRKDPIFVDGHRPRPMYVDYKDLELLSKMVNRQGRIMGRRKSGCTAASQHAVTAAIKRARFMALLPYVGE</sequence>
<reference key="1">
    <citation type="journal article" date="2003" name="Proc. Natl. Acad. Sci. U.S.A.">
        <title>Complete genome sequence of the marine planctomycete Pirellula sp. strain 1.</title>
        <authorList>
            <person name="Gloeckner F.O."/>
            <person name="Kube M."/>
            <person name="Bauer M."/>
            <person name="Teeling H."/>
            <person name="Lombardot T."/>
            <person name="Ludwig W."/>
            <person name="Gade D."/>
            <person name="Beck A."/>
            <person name="Borzym K."/>
            <person name="Heitmann K."/>
            <person name="Rabus R."/>
            <person name="Schlesner H."/>
            <person name="Amann R."/>
            <person name="Reinhardt R."/>
        </authorList>
    </citation>
    <scope>NUCLEOTIDE SEQUENCE [LARGE SCALE GENOMIC DNA]</scope>
    <source>
        <strain>DSM 10527 / NCIMB 13988 / SH1</strain>
    </source>
</reference>
<dbReference type="EMBL" id="BX294147">
    <property type="protein sequence ID" value="CAD78649.1"/>
    <property type="status" value="ALT_INIT"/>
    <property type="molecule type" value="Genomic_DNA"/>
</dbReference>
<dbReference type="RefSeq" id="NP_868371.1">
    <property type="nucleotide sequence ID" value="NC_005027.1"/>
</dbReference>
<dbReference type="SMR" id="Q7UFN3"/>
<dbReference type="FunCoup" id="Q7UFN3">
    <property type="interactions" value="542"/>
</dbReference>
<dbReference type="STRING" id="243090.RB8459"/>
<dbReference type="EnsemblBacteria" id="CAD78649">
    <property type="protein sequence ID" value="CAD78649"/>
    <property type="gene ID" value="RB8459"/>
</dbReference>
<dbReference type="KEGG" id="rba:RB8459"/>
<dbReference type="PATRIC" id="fig|243090.15.peg.4067"/>
<dbReference type="eggNOG" id="COG0238">
    <property type="taxonomic scope" value="Bacteria"/>
</dbReference>
<dbReference type="HOGENOM" id="CLU_148710_2_3_0"/>
<dbReference type="InParanoid" id="Q7UFN3"/>
<dbReference type="OrthoDB" id="9812008at2"/>
<dbReference type="Proteomes" id="UP000001025">
    <property type="component" value="Chromosome"/>
</dbReference>
<dbReference type="GO" id="GO:0022627">
    <property type="term" value="C:cytosolic small ribosomal subunit"/>
    <property type="evidence" value="ECO:0000318"/>
    <property type="project" value="GO_Central"/>
</dbReference>
<dbReference type="GO" id="GO:0070181">
    <property type="term" value="F:small ribosomal subunit rRNA binding"/>
    <property type="evidence" value="ECO:0000318"/>
    <property type="project" value="GO_Central"/>
</dbReference>
<dbReference type="GO" id="GO:0003735">
    <property type="term" value="F:structural constituent of ribosome"/>
    <property type="evidence" value="ECO:0000318"/>
    <property type="project" value="GO_Central"/>
</dbReference>
<dbReference type="GO" id="GO:0006412">
    <property type="term" value="P:translation"/>
    <property type="evidence" value="ECO:0000318"/>
    <property type="project" value="GO_Central"/>
</dbReference>
<dbReference type="FunFam" id="4.10.640.10:FF:000029">
    <property type="entry name" value="30S ribosomal protein S18"/>
    <property type="match status" value="1"/>
</dbReference>
<dbReference type="Gene3D" id="4.10.640.10">
    <property type="entry name" value="Ribosomal protein S18"/>
    <property type="match status" value="1"/>
</dbReference>
<dbReference type="HAMAP" id="MF_00270">
    <property type="entry name" value="Ribosomal_bS18"/>
    <property type="match status" value="1"/>
</dbReference>
<dbReference type="InterPro" id="IPR001648">
    <property type="entry name" value="Ribosomal_bS18"/>
</dbReference>
<dbReference type="InterPro" id="IPR036870">
    <property type="entry name" value="Ribosomal_bS18_sf"/>
</dbReference>
<dbReference type="NCBIfam" id="TIGR00165">
    <property type="entry name" value="S18"/>
    <property type="match status" value="1"/>
</dbReference>
<dbReference type="PANTHER" id="PTHR13479">
    <property type="entry name" value="30S RIBOSOMAL PROTEIN S18"/>
    <property type="match status" value="1"/>
</dbReference>
<dbReference type="PANTHER" id="PTHR13479:SF40">
    <property type="entry name" value="SMALL RIBOSOMAL SUBUNIT PROTEIN BS18M"/>
    <property type="match status" value="1"/>
</dbReference>
<dbReference type="Pfam" id="PF01084">
    <property type="entry name" value="Ribosomal_S18"/>
    <property type="match status" value="1"/>
</dbReference>
<dbReference type="PRINTS" id="PR00974">
    <property type="entry name" value="RIBOSOMALS18"/>
</dbReference>
<dbReference type="SUPFAM" id="SSF46911">
    <property type="entry name" value="Ribosomal protein S18"/>
    <property type="match status" value="1"/>
</dbReference>
<gene>
    <name evidence="1" type="primary">rpsR</name>
    <name type="ordered locus">RB8459</name>
</gene>
<protein>
    <recommendedName>
        <fullName evidence="1">Small ribosomal subunit protein bS18</fullName>
    </recommendedName>
    <alternativeName>
        <fullName evidence="3">30S ribosomal protein S18</fullName>
    </alternativeName>
</protein>
<name>RS18_RHOBA</name>
<proteinExistence type="inferred from homology"/>
<evidence type="ECO:0000255" key="1">
    <source>
        <dbReference type="HAMAP-Rule" id="MF_00270"/>
    </source>
</evidence>
<evidence type="ECO:0000256" key="2">
    <source>
        <dbReference type="SAM" id="MobiDB-lite"/>
    </source>
</evidence>
<evidence type="ECO:0000305" key="3"/>
<feature type="chain" id="PRO_0000345533" description="Small ribosomal subunit protein bS18">
    <location>
        <begin position="1"/>
        <end position="87"/>
    </location>
</feature>
<feature type="region of interest" description="Disordered" evidence="2">
    <location>
        <begin position="1"/>
        <end position="25"/>
    </location>
</feature>
<feature type="compositionally biased region" description="Basic residues" evidence="2">
    <location>
        <begin position="1"/>
        <end position="19"/>
    </location>
</feature>
<comment type="function">
    <text evidence="1">Binds as a heterodimer with protein bS6 to the central domain of the 16S rRNA, where it helps stabilize the platform of the 30S subunit.</text>
</comment>
<comment type="subunit">
    <text evidence="1">Part of the 30S ribosomal subunit. Forms a tight heterodimer with protein bS6.</text>
</comment>
<comment type="similarity">
    <text evidence="1">Belongs to the bacterial ribosomal protein bS18 family.</text>
</comment>
<comment type="sequence caution" evidence="3">
    <conflict type="erroneous initiation">
        <sequence resource="EMBL-CDS" id="CAD78649"/>
    </conflict>
</comment>
<organism>
    <name type="scientific">Rhodopirellula baltica (strain DSM 10527 / NCIMB 13988 / SH1)</name>
    <dbReference type="NCBI Taxonomy" id="243090"/>
    <lineage>
        <taxon>Bacteria</taxon>
        <taxon>Pseudomonadati</taxon>
        <taxon>Planctomycetota</taxon>
        <taxon>Planctomycetia</taxon>
        <taxon>Pirellulales</taxon>
        <taxon>Pirellulaceae</taxon>
        <taxon>Rhodopirellula</taxon>
    </lineage>
</organism>
<accession>Q7UFN3</accession>